<organism>
    <name type="scientific">Caulobacter vibrioides (strain NA1000 / CB15N)</name>
    <name type="common">Caulobacter crescentus</name>
    <dbReference type="NCBI Taxonomy" id="565050"/>
    <lineage>
        <taxon>Bacteria</taxon>
        <taxon>Pseudomonadati</taxon>
        <taxon>Pseudomonadota</taxon>
        <taxon>Alphaproteobacteria</taxon>
        <taxon>Caulobacterales</taxon>
        <taxon>Caulobacteraceae</taxon>
        <taxon>Caulobacter</taxon>
    </lineage>
</organism>
<accession>B8GVS9</accession>
<feature type="chain" id="PRO_1000196359" description="Small ribosomal subunit protein bS16">
    <location>
        <begin position="1"/>
        <end position="165"/>
    </location>
</feature>
<feature type="region of interest" description="Disordered" evidence="2">
    <location>
        <begin position="84"/>
        <end position="165"/>
    </location>
</feature>
<feature type="compositionally biased region" description="Basic and acidic residues" evidence="2">
    <location>
        <begin position="89"/>
        <end position="130"/>
    </location>
</feature>
<feature type="compositionally biased region" description="Low complexity" evidence="2">
    <location>
        <begin position="131"/>
        <end position="157"/>
    </location>
</feature>
<protein>
    <recommendedName>
        <fullName evidence="1">Small ribosomal subunit protein bS16</fullName>
    </recommendedName>
    <alternativeName>
        <fullName evidence="3">30S ribosomal protein S16</fullName>
    </alternativeName>
</protein>
<evidence type="ECO:0000255" key="1">
    <source>
        <dbReference type="HAMAP-Rule" id="MF_00385"/>
    </source>
</evidence>
<evidence type="ECO:0000256" key="2">
    <source>
        <dbReference type="SAM" id="MobiDB-lite"/>
    </source>
</evidence>
<evidence type="ECO:0000305" key="3"/>
<gene>
    <name evidence="1" type="primary">rpsP</name>
    <name type="ordered locus">CCNA_03767</name>
</gene>
<proteinExistence type="inferred from homology"/>
<comment type="similarity">
    <text evidence="1">Belongs to the bacterial ribosomal protein bS16 family.</text>
</comment>
<sequence>MLKIRLARGGAKKRPYYSIVVADSHSPRDGRFIEKVGTYNPLLKKDDANRVTLKVESIQEWLKKGAQPTDRVARFLAAQGLVAWTHGNNPEKGKPGKKAQERLAERAQREEERKQAEADAKAAAEAEKAAAAEAAAAAAAAPAVEEAPAEEAPAAEAPAEEAAEG</sequence>
<keyword id="KW-1185">Reference proteome</keyword>
<keyword id="KW-0687">Ribonucleoprotein</keyword>
<keyword id="KW-0689">Ribosomal protein</keyword>
<reference key="1">
    <citation type="journal article" date="2010" name="J. Bacteriol.">
        <title>The genetic basis of laboratory adaptation in Caulobacter crescentus.</title>
        <authorList>
            <person name="Marks M.E."/>
            <person name="Castro-Rojas C.M."/>
            <person name="Teiling C."/>
            <person name="Du L."/>
            <person name="Kapatral V."/>
            <person name="Walunas T.L."/>
            <person name="Crosson S."/>
        </authorList>
    </citation>
    <scope>NUCLEOTIDE SEQUENCE [LARGE SCALE GENOMIC DNA]</scope>
    <source>
        <strain>NA1000 / CB15N</strain>
    </source>
</reference>
<dbReference type="EMBL" id="CP001340">
    <property type="protein sequence ID" value="ACL97232.1"/>
    <property type="molecule type" value="Genomic_DNA"/>
</dbReference>
<dbReference type="RefSeq" id="WP_010921479.1">
    <property type="nucleotide sequence ID" value="NC_011916.1"/>
</dbReference>
<dbReference type="RefSeq" id="YP_002519140.1">
    <property type="nucleotide sequence ID" value="NC_011916.1"/>
</dbReference>
<dbReference type="SMR" id="B8GVS9"/>
<dbReference type="GeneID" id="7331963"/>
<dbReference type="KEGG" id="ccs:CCNA_03767"/>
<dbReference type="PATRIC" id="fig|565050.3.peg.3671"/>
<dbReference type="HOGENOM" id="CLU_100590_3_0_5"/>
<dbReference type="OrthoDB" id="9807878at2"/>
<dbReference type="PhylomeDB" id="B8GVS9"/>
<dbReference type="Proteomes" id="UP000001364">
    <property type="component" value="Chromosome"/>
</dbReference>
<dbReference type="GO" id="GO:0005737">
    <property type="term" value="C:cytoplasm"/>
    <property type="evidence" value="ECO:0007669"/>
    <property type="project" value="UniProtKB-ARBA"/>
</dbReference>
<dbReference type="GO" id="GO:0015935">
    <property type="term" value="C:small ribosomal subunit"/>
    <property type="evidence" value="ECO:0007669"/>
    <property type="project" value="TreeGrafter"/>
</dbReference>
<dbReference type="GO" id="GO:0003735">
    <property type="term" value="F:structural constituent of ribosome"/>
    <property type="evidence" value="ECO:0007669"/>
    <property type="project" value="InterPro"/>
</dbReference>
<dbReference type="GO" id="GO:0006412">
    <property type="term" value="P:translation"/>
    <property type="evidence" value="ECO:0007669"/>
    <property type="project" value="UniProtKB-UniRule"/>
</dbReference>
<dbReference type="Gene3D" id="3.30.1320.10">
    <property type="match status" value="1"/>
</dbReference>
<dbReference type="HAMAP" id="MF_00385">
    <property type="entry name" value="Ribosomal_bS16"/>
    <property type="match status" value="1"/>
</dbReference>
<dbReference type="InterPro" id="IPR000307">
    <property type="entry name" value="Ribosomal_bS16"/>
</dbReference>
<dbReference type="InterPro" id="IPR020592">
    <property type="entry name" value="Ribosomal_bS16_CS"/>
</dbReference>
<dbReference type="InterPro" id="IPR023803">
    <property type="entry name" value="Ribosomal_bS16_dom_sf"/>
</dbReference>
<dbReference type="NCBIfam" id="TIGR00002">
    <property type="entry name" value="S16"/>
    <property type="match status" value="1"/>
</dbReference>
<dbReference type="PANTHER" id="PTHR12919">
    <property type="entry name" value="30S RIBOSOMAL PROTEIN S16"/>
    <property type="match status" value="1"/>
</dbReference>
<dbReference type="PANTHER" id="PTHR12919:SF20">
    <property type="entry name" value="SMALL RIBOSOMAL SUBUNIT PROTEIN BS16M"/>
    <property type="match status" value="1"/>
</dbReference>
<dbReference type="Pfam" id="PF00886">
    <property type="entry name" value="Ribosomal_S16"/>
    <property type="match status" value="1"/>
</dbReference>
<dbReference type="SUPFAM" id="SSF54565">
    <property type="entry name" value="Ribosomal protein S16"/>
    <property type="match status" value="1"/>
</dbReference>
<dbReference type="PROSITE" id="PS00732">
    <property type="entry name" value="RIBOSOMAL_S16"/>
    <property type="match status" value="1"/>
</dbReference>
<name>RS16_CAUVN</name>